<dbReference type="EMBL" id="BA000018">
    <property type="protein sequence ID" value="BAB42225.1"/>
    <property type="molecule type" value="Genomic_DNA"/>
</dbReference>
<dbReference type="PIR" id="E89883">
    <property type="entry name" value="E89883"/>
</dbReference>
<dbReference type="RefSeq" id="WP_001041583.1">
    <property type="nucleotide sequence ID" value="NC_002745.2"/>
</dbReference>
<dbReference type="PDB" id="3RTL">
    <property type="method" value="X-ray"/>
    <property type="resolution" value="1.45 A"/>
    <property type="chains" value="A/B/C/D=341-459"/>
</dbReference>
<dbReference type="PDB" id="3RUR">
    <property type="method" value="X-ray"/>
    <property type="resolution" value="1.70 A"/>
    <property type="chains" value="A/B/C/D=341-459"/>
</dbReference>
<dbReference type="PDB" id="5VMM">
    <property type="method" value="X-ray"/>
    <property type="resolution" value="3.60 A"/>
    <property type="chains" value="E/F=126-459, H/J=126-265"/>
</dbReference>
<dbReference type="PDBsum" id="3RTL"/>
<dbReference type="PDBsum" id="3RUR"/>
<dbReference type="PDBsum" id="5VMM"/>
<dbReference type="SMR" id="Q7A656"/>
<dbReference type="EnsemblBacteria" id="BAB42225">
    <property type="protein sequence ID" value="BAB42225"/>
    <property type="gene ID" value="BAB42225"/>
</dbReference>
<dbReference type="KEGG" id="sau:SA0976"/>
<dbReference type="HOGENOM" id="CLU_016167_0_0_9"/>
<dbReference type="EvolutionaryTrace" id="Q7A656"/>
<dbReference type="PHI-base" id="PHI:10417"/>
<dbReference type="PHI-base" id="PHI:11755"/>
<dbReference type="PRO" id="PR:Q7A656"/>
<dbReference type="GO" id="GO:0005576">
    <property type="term" value="C:extracellular region"/>
    <property type="evidence" value="ECO:0007669"/>
    <property type="project" value="UniProtKB-KW"/>
</dbReference>
<dbReference type="GO" id="GO:0015232">
    <property type="term" value="F:heme transmembrane transporter activity"/>
    <property type="evidence" value="ECO:0007669"/>
    <property type="project" value="InterPro"/>
</dbReference>
<dbReference type="GO" id="GO:0046872">
    <property type="term" value="F:metal ion binding"/>
    <property type="evidence" value="ECO:0007669"/>
    <property type="project" value="UniProtKB-KW"/>
</dbReference>
<dbReference type="CDD" id="cd06920">
    <property type="entry name" value="NEAT"/>
    <property type="match status" value="1"/>
</dbReference>
<dbReference type="Gene3D" id="1.20.58.1270">
    <property type="match status" value="1"/>
</dbReference>
<dbReference type="Gene3D" id="2.60.40.1850">
    <property type="match status" value="2"/>
</dbReference>
<dbReference type="InterPro" id="IPR019929">
    <property type="entry name" value="Iron-reg_IsdB"/>
</dbReference>
<dbReference type="InterPro" id="IPR048652">
    <property type="entry name" value="Isd_H_B_linker"/>
</dbReference>
<dbReference type="InterPro" id="IPR050436">
    <property type="entry name" value="IsdA"/>
</dbReference>
<dbReference type="InterPro" id="IPR019931">
    <property type="entry name" value="LPXTG_anchor"/>
</dbReference>
<dbReference type="InterPro" id="IPR006635">
    <property type="entry name" value="NEAT_dom"/>
</dbReference>
<dbReference type="InterPro" id="IPR037250">
    <property type="entry name" value="NEAT_dom_sf"/>
</dbReference>
<dbReference type="InterPro" id="IPR005877">
    <property type="entry name" value="YSIRK_signal_dom"/>
</dbReference>
<dbReference type="NCBIfam" id="TIGR03657">
    <property type="entry name" value="IsdB"/>
    <property type="match status" value="1"/>
</dbReference>
<dbReference type="NCBIfam" id="TIGR01167">
    <property type="entry name" value="LPXTG_anchor"/>
    <property type="match status" value="1"/>
</dbReference>
<dbReference type="NCBIfam" id="TIGR01168">
    <property type="entry name" value="YSIRK_signal"/>
    <property type="match status" value="1"/>
</dbReference>
<dbReference type="PANTHER" id="PTHR37824">
    <property type="entry name" value="IRON-REGULATED SURFACE DETERMINANT PROTEIN C"/>
    <property type="match status" value="1"/>
</dbReference>
<dbReference type="PANTHER" id="PTHR37824:SF1">
    <property type="entry name" value="IRON-REGULATED SURFACE DETERMINANT PROTEIN C"/>
    <property type="match status" value="1"/>
</dbReference>
<dbReference type="Pfam" id="PF00746">
    <property type="entry name" value="Gram_pos_anchor"/>
    <property type="match status" value="1"/>
</dbReference>
<dbReference type="Pfam" id="PF20861">
    <property type="entry name" value="Isd_H_B_linker"/>
    <property type="match status" value="1"/>
</dbReference>
<dbReference type="Pfam" id="PF05031">
    <property type="entry name" value="NEAT"/>
    <property type="match status" value="2"/>
</dbReference>
<dbReference type="Pfam" id="PF04650">
    <property type="entry name" value="YSIRK_signal"/>
    <property type="match status" value="1"/>
</dbReference>
<dbReference type="SMART" id="SM00725">
    <property type="entry name" value="NEAT"/>
    <property type="match status" value="2"/>
</dbReference>
<dbReference type="SUPFAM" id="SSF158911">
    <property type="entry name" value="NEAT domain-like"/>
    <property type="match status" value="2"/>
</dbReference>
<dbReference type="PROSITE" id="PS50847">
    <property type="entry name" value="GRAM_POS_ANCHORING"/>
    <property type="match status" value="1"/>
</dbReference>
<dbReference type="PROSITE" id="PS50978">
    <property type="entry name" value="NEAT"/>
    <property type="match status" value="2"/>
</dbReference>
<keyword id="KW-0002">3D-structure</keyword>
<keyword id="KW-0134">Cell wall</keyword>
<keyword id="KW-0349">Heme</keyword>
<keyword id="KW-0408">Iron</keyword>
<keyword id="KW-0479">Metal-binding</keyword>
<keyword id="KW-0572">Peptidoglycan-anchor</keyword>
<keyword id="KW-0677">Repeat</keyword>
<keyword id="KW-0964">Secreted</keyword>
<keyword id="KW-0732">Signal</keyword>
<keyword id="KW-0843">Virulence</keyword>
<evidence type="ECO:0000250" key="1"/>
<evidence type="ECO:0000250" key="2">
    <source>
        <dbReference type="UniProtKB" id="Q2FZF0"/>
    </source>
</evidence>
<evidence type="ECO:0000250" key="3">
    <source>
        <dbReference type="UniProtKB" id="Q8NX66"/>
    </source>
</evidence>
<evidence type="ECO:0000255" key="4"/>
<evidence type="ECO:0000255" key="5">
    <source>
        <dbReference type="PROSITE-ProRule" id="PRU00337"/>
    </source>
</evidence>
<evidence type="ECO:0000255" key="6">
    <source>
        <dbReference type="PROSITE-ProRule" id="PRU00477"/>
    </source>
</evidence>
<evidence type="ECO:0000256" key="7">
    <source>
        <dbReference type="SAM" id="MobiDB-lite"/>
    </source>
</evidence>
<evidence type="ECO:0000269" key="8">
    <source>
    </source>
</evidence>
<evidence type="ECO:0000269" key="9">
    <source>
    </source>
</evidence>
<evidence type="ECO:0000269" key="10">
    <source>
    </source>
</evidence>
<evidence type="ECO:0000269" key="11">
    <source>
    </source>
</evidence>
<evidence type="ECO:0000305" key="12"/>
<evidence type="ECO:0007744" key="13">
    <source>
        <dbReference type="PDB" id="3RTL"/>
    </source>
</evidence>
<evidence type="ECO:0007744" key="14">
    <source>
        <dbReference type="PDB" id="3RUR"/>
    </source>
</evidence>
<evidence type="ECO:0007744" key="15">
    <source>
        <dbReference type="PDB" id="5VMM"/>
    </source>
</evidence>
<evidence type="ECO:0007829" key="16">
    <source>
        <dbReference type="PDB" id="3RTL"/>
    </source>
</evidence>
<name>ISDB_STAAN</name>
<feature type="signal peptide" evidence="4">
    <location>
        <begin position="1"/>
        <end position="40"/>
    </location>
</feature>
<feature type="chain" id="PRO_0000292577" description="Iron-regulated surface determinant protein B">
    <location>
        <begin position="41"/>
        <end position="613"/>
    </location>
</feature>
<feature type="propeptide" id="PRO_0000292578" description="Removed by sortase" evidence="6">
    <location>
        <begin position="614"/>
        <end position="645"/>
    </location>
</feature>
<feature type="domain" description="NEAT 1" evidence="5">
    <location>
        <begin position="144"/>
        <end position="269"/>
    </location>
</feature>
<feature type="domain" description="NEAT 2" evidence="5">
    <location>
        <begin position="341"/>
        <end position="458"/>
    </location>
</feature>
<feature type="region of interest" description="Disordered" evidence="7">
    <location>
        <begin position="38"/>
        <end position="113"/>
    </location>
</feature>
<feature type="region of interest" description="Disordered" evidence="7">
    <location>
        <begin position="458"/>
        <end position="619"/>
    </location>
</feature>
<feature type="short sequence motif" description="YSIRK-G/S signaling motif" evidence="2">
    <location>
        <begin position="12"/>
        <end position="23"/>
    </location>
</feature>
<feature type="short sequence motif" description="LPXTG sorting signal" evidence="6">
    <location>
        <begin position="610"/>
        <end position="614"/>
    </location>
</feature>
<feature type="compositionally biased region" description="Low complexity" evidence="7">
    <location>
        <begin position="38"/>
        <end position="53"/>
    </location>
</feature>
<feature type="compositionally biased region" description="Basic and acidic residues" evidence="7">
    <location>
        <begin position="84"/>
        <end position="110"/>
    </location>
</feature>
<feature type="compositionally biased region" description="Basic and acidic residues" evidence="7">
    <location>
        <begin position="458"/>
        <end position="476"/>
    </location>
</feature>
<feature type="compositionally biased region" description="Basic and acidic residues" evidence="7">
    <location>
        <begin position="489"/>
        <end position="534"/>
    </location>
</feature>
<feature type="compositionally biased region" description="Low complexity" evidence="7">
    <location>
        <begin position="535"/>
        <end position="560"/>
    </location>
</feature>
<feature type="compositionally biased region" description="Polar residues" evidence="7">
    <location>
        <begin position="585"/>
        <end position="615"/>
    </location>
</feature>
<feature type="binding site" description="axial binding residue" evidence="9 13">
    <location>
        <position position="362"/>
    </location>
    <ligand>
        <name>heme</name>
        <dbReference type="ChEBI" id="CHEBI:30413"/>
    </ligand>
    <ligandPart>
        <name>Fe</name>
        <dbReference type="ChEBI" id="CHEBI:18248"/>
    </ligandPart>
</feature>
<feature type="binding site" description="axial binding residue" evidence="9 13 14">
    <location>
        <position position="440"/>
    </location>
    <ligand>
        <name>heme</name>
        <dbReference type="ChEBI" id="CHEBI:30413"/>
    </ligand>
    <ligandPart>
        <name>Fe</name>
        <dbReference type="ChEBI" id="CHEBI:18248"/>
    </ligandPart>
</feature>
<feature type="modified residue" description="Pentaglycyl murein peptidoglycan amidated threonine" evidence="6">
    <location>
        <position position="613"/>
    </location>
</feature>
<feature type="mutagenesis site" description="Severe heme binding disruption." evidence="9">
    <original>S</original>
    <variation>A</variation>
    <location>
        <position position="361"/>
    </location>
</feature>
<feature type="mutagenesis site" description="Severe heme binding disruption." evidence="9">
    <original>Y</original>
    <variation>A</variation>
    <location>
        <position position="440"/>
    </location>
</feature>
<feature type="mutagenesis site" description="Complete loss of heme transfer; in association with F-444." evidence="11">
    <original>Y</original>
    <variation>F</variation>
    <location>
        <position position="440"/>
    </location>
</feature>
<feature type="mutagenesis site" description="Severe heme binding disruption." evidence="9">
    <original>Y</original>
    <variation>A</variation>
    <location>
        <position position="444"/>
    </location>
</feature>
<feature type="mutagenesis site" description="Complete loss of heme transfer; in association with F-440." evidence="11">
    <original>Y</original>
    <variation>F</variation>
    <location>
        <position position="444"/>
    </location>
</feature>
<feature type="strand" evidence="16">
    <location>
        <begin position="343"/>
        <end position="347"/>
    </location>
</feature>
<feature type="strand" evidence="16">
    <location>
        <begin position="350"/>
        <end position="360"/>
    </location>
</feature>
<feature type="helix" evidence="16">
    <location>
        <begin position="362"/>
        <end position="366"/>
    </location>
</feature>
<feature type="strand" evidence="16">
    <location>
        <begin position="372"/>
        <end position="376"/>
    </location>
</feature>
<feature type="strand" evidence="16">
    <location>
        <begin position="379"/>
        <end position="388"/>
    </location>
</feature>
<feature type="helix" evidence="16">
    <location>
        <begin position="389"/>
        <end position="391"/>
    </location>
</feature>
<feature type="strand" evidence="16">
    <location>
        <begin position="392"/>
        <end position="397"/>
    </location>
</feature>
<feature type="strand" evidence="16">
    <location>
        <begin position="403"/>
        <end position="408"/>
    </location>
</feature>
<feature type="turn" evidence="16">
    <location>
        <begin position="409"/>
        <end position="412"/>
    </location>
</feature>
<feature type="strand" evidence="16">
    <location>
        <begin position="413"/>
        <end position="419"/>
    </location>
</feature>
<feature type="strand" evidence="16">
    <location>
        <begin position="426"/>
        <end position="435"/>
    </location>
</feature>
<feature type="helix" evidence="16">
    <location>
        <begin position="436"/>
        <end position="438"/>
    </location>
</feature>
<feature type="strand" evidence="16">
    <location>
        <begin position="440"/>
        <end position="450"/>
    </location>
</feature>
<feature type="helix" evidence="16">
    <location>
        <begin position="453"/>
        <end position="457"/>
    </location>
</feature>
<protein>
    <recommendedName>
        <fullName>Iron-regulated surface determinant protein B</fullName>
    </recommendedName>
    <alternativeName>
        <fullName>Fur-regulated protein B</fullName>
    </alternativeName>
    <alternativeName>
        <fullName>Staphylococcal iron-regulated protein H</fullName>
    </alternativeName>
    <alternativeName>
        <fullName>Staphylococcus aureus surface protein J</fullName>
    </alternativeName>
</protein>
<proteinExistence type="evidence at protein level"/>
<gene>
    <name type="primary">isdB</name>
    <name type="synonym">frpB</name>
    <name type="synonym">sasJ</name>
    <name type="synonym">sirH</name>
    <name type="ordered locus">SA0976</name>
</gene>
<accession>Q7A656</accession>
<comment type="function">
    <text evidence="3 9 10 11">Cell wall-anchored surface receptor that extracts heme from oxidized methemoglobin/metHb to enable growth on hemoglobin as a sole iron source (PubMed:24645787). Rapidly extracts heme from hemoglobin and transfers it to IsdA or IsdC, which then relays it to the membrane transporter/IsdEF for internalization (PubMed:21574663, PubMed:24645787, PubMed:29109153). Also promotes resistance to hydrogen peroxide and killing by neutrophils (By similarity).</text>
</comment>
<comment type="subunit">
    <text evidence="3 10 11">Interacts with host HBA; this interaction allows heme extraction as iron source. Interacts with IsdA (By similarity).</text>
</comment>
<comment type="subcellular location">
    <subcellularLocation>
        <location evidence="6">Secreted</location>
        <location evidence="6">Cell wall</location>
        <topology evidence="6">Peptidoglycan-anchor</topology>
    </subcellularLocation>
    <text evidence="2">Anchored to the cell wall by sortase A (By similarity).</text>
</comment>
<comment type="induction">
    <text evidence="1">Repressed by fur in the presence of iron.</text>
</comment>
<comment type="domain">
    <text evidence="10">The two NEAr transporter (NEAT) domains act in concert to bind, extract, and transfer heme from hemoglobin to downstream Isd proteins.</text>
</comment>
<comment type="biotechnology">
    <text evidence="8">A combined vaccine containing IsdA, IsdB, SdrD and SdrE afforded significant protection in mice against a lethal challenge with S.aureus Newman or any of the clinical isolates NRS252, N315, NRS248, USA100 and USA400. The immune response elicited by the combined vaccine is greater than the one elicited by its individual components.</text>
</comment>
<comment type="similarity">
    <text evidence="12">Belongs to the IsdB family.</text>
</comment>
<sequence length="645" mass="72162">MNKQQKEFKSFYSIRKSSLGVASVAISTLLLLMSNGEAQAAAEETGGTNTEAQPKTEAVASPTTTSEKAPETKPVANAVSVSNKEVEAPTSETKEAKEVKEVKAPKETKAVKPAAKATNNTYPILNQELREAIKNPAIKDKDHSAPNSRPIDFEMKKENGEQQFYHYASSVKPARVIFTDSKPEIELGLQSGQFWRKFEVYEGDKKLPIKLVSYDTVKDYAYIRFSVSNGTKAVKIVSSTHFNNKEEKYDYTLMEFAQPIYNSADKFKTEEDYKAEKLLAPYKKAKTLERQVYELNKIQDKLPEKLKAEYKKKLEDTKKALDEQVKSAITEFQNVQPTNEKMTDLQDTKYVVYESVENNESMMDTFVKHPIKTGMLNGKKYMVMETTNDDYWKDFMVEGQRVRTISKDAKNNTRTIIFPYVEGKTLYDAIVKVHVKTIDYDGQYHVRIVDKEAFTKANTDKSNKKEQQDNSAKKEATPATPSKPTPSPVEKESQKQDSQKDDNKQLPSVEKENDASSESGKDKTPATKPTKGEVESSSTTPTKVVSTTQNVAKPTTASSKTTKDVVQTSAGSSEAKDSAPLQKANIKNTNDGHTQSQNNKNTQENKAKSLPQTGEESNKDMTLPLMALLALSSIVAFVLPRKRKN</sequence>
<reference key="1">
    <citation type="journal article" date="2001" name="Lancet">
        <title>Whole genome sequencing of meticillin-resistant Staphylococcus aureus.</title>
        <authorList>
            <person name="Kuroda M."/>
            <person name="Ohta T."/>
            <person name="Uchiyama I."/>
            <person name="Baba T."/>
            <person name="Yuzawa H."/>
            <person name="Kobayashi I."/>
            <person name="Cui L."/>
            <person name="Oguchi A."/>
            <person name="Aoki K."/>
            <person name="Nagai Y."/>
            <person name="Lian J.-Q."/>
            <person name="Ito T."/>
            <person name="Kanamori M."/>
            <person name="Matsumaru H."/>
            <person name="Maruyama A."/>
            <person name="Murakami H."/>
            <person name="Hosoyama A."/>
            <person name="Mizutani-Ui Y."/>
            <person name="Takahashi N.K."/>
            <person name="Sawano T."/>
            <person name="Inoue R."/>
            <person name="Kaito C."/>
            <person name="Sekimizu K."/>
            <person name="Hirakawa H."/>
            <person name="Kuhara S."/>
            <person name="Goto S."/>
            <person name="Yabuzaki J."/>
            <person name="Kanehisa M."/>
            <person name="Yamashita A."/>
            <person name="Oshima K."/>
            <person name="Furuya K."/>
            <person name="Yoshino C."/>
            <person name="Shiba T."/>
            <person name="Hattori M."/>
            <person name="Ogasawara N."/>
            <person name="Hayashi H."/>
            <person name="Hiramatsu K."/>
        </authorList>
    </citation>
    <scope>NUCLEOTIDE SEQUENCE [LARGE SCALE GENOMIC DNA]</scope>
    <source>
        <strain>N315</strain>
    </source>
</reference>
<reference key="2">
    <citation type="journal article" date="2006" name="Proc. Natl. Acad. Sci. U.S.A.">
        <title>Vaccine assembly from surface proteins of Staphylococcus aureus.</title>
        <authorList>
            <person name="Stranger-Jones Y.K."/>
            <person name="Bae T."/>
            <person name="Schneewind O."/>
        </authorList>
    </citation>
    <scope>BIOTECHNOLOGY</scope>
</reference>
<reference key="3">
    <citation type="journal article" date="2014" name="Biochemistry">
        <title>Hemoglobin binding and catalytic heme extraction by IsdB near iron transporter domains.</title>
        <authorList>
            <person name="Bowden C.F."/>
            <person name="Verstraete M.M."/>
            <person name="Eltis L.D."/>
            <person name="Murphy M.E."/>
        </authorList>
    </citation>
    <scope>FUNCTION</scope>
    <scope>DOMAIN</scope>
    <scope>INTERACTION WITH HOST HBA</scope>
</reference>
<reference evidence="13 14" key="4">
    <citation type="journal article" date="2011" name="Biochemistry">
        <title>Unique heme-iron coordination by the hemoglobin receptor IsdB of Staphylococcus aureus.</title>
        <authorList>
            <person name="Gaudin C.F."/>
            <person name="Grigg J.C."/>
            <person name="Arrieta A.L."/>
            <person name="Murphy M.E."/>
        </authorList>
    </citation>
    <scope>X-RAY CRYSTALLOGRAPHY (1.45 ANGSTROMS) OF 341-459 IN COMPLEX WITH HEME</scope>
    <scope>MUTAGENESIS OF SER-361; TYR-440 AND TYR-444</scope>
    <scope>FUNCTION</scope>
</reference>
<reference evidence="15" key="5">
    <citation type="journal article" date="2018" name="J. Biol. Chem.">
        <title>Structure-function analyses reveal key features in Staphylococcus aureus IsdB-associated unfolding of the heme-binding pocket of human hemoglobin.</title>
        <authorList>
            <person name="Bowden C.F.M."/>
            <person name="Chan A.C.K."/>
            <person name="Li E.J.W."/>
            <person name="Arrieta A.L."/>
            <person name="Eltis L.D."/>
            <person name="Murphy M.E.P."/>
        </authorList>
    </citation>
    <scope>X-RAY CRYSTALLOGRAPHY (3.60 ANGSTROMS) OF 126-459 AND 126-265</scope>
    <scope>FUNCTION</scope>
    <scope>INTERACTION WITH HOST HBA</scope>
    <scope>MUTAGENESIS OF TYR-440 AND TYR-444</scope>
</reference>
<organism>
    <name type="scientific">Staphylococcus aureus (strain N315)</name>
    <dbReference type="NCBI Taxonomy" id="158879"/>
    <lineage>
        <taxon>Bacteria</taxon>
        <taxon>Bacillati</taxon>
        <taxon>Bacillota</taxon>
        <taxon>Bacilli</taxon>
        <taxon>Bacillales</taxon>
        <taxon>Staphylococcaceae</taxon>
        <taxon>Staphylococcus</taxon>
    </lineage>
</organism>